<evidence type="ECO:0000250" key="1">
    <source>
        <dbReference type="UniProtKB" id="P0C1Z0"/>
    </source>
</evidence>
<evidence type="ECO:0000269" key="2">
    <source>
    </source>
</evidence>
<evidence type="ECO:0000269" key="3">
    <source>
    </source>
</evidence>
<evidence type="ECO:0000305" key="4"/>
<comment type="function">
    <text evidence="2 3">Binds to muscle nicotinic acetylcholine receptor (nAChR) and inhibit acetylcholine from binding to the receptor, thereby impairing neuromuscular transmission.</text>
</comment>
<comment type="subcellular location">
    <subcellularLocation>
        <location evidence="3">Secreted</location>
    </subcellularLocation>
</comment>
<comment type="tissue specificity">
    <text evidence="4">Expressed by the venom gland.</text>
</comment>
<comment type="mass spectrometry"/>
<comment type="toxic dose">
    <text evidence="3">LD(50) is 63 ug/kg by intraperitoneal injection into mice.</text>
</comment>
<comment type="similarity">
    <text evidence="4">Belongs to the three-finger toxin family. Short-chain subfamily. Type I alpha-neurotoxin sub-subfamily.</text>
</comment>
<protein>
    <recommendedName>
        <fullName>Short neurotoxin 1</fullName>
        <shortName>SNTX-1</shortName>
    </recommendedName>
    <alternativeName>
        <fullName>Toxin 3</fullName>
    </alternativeName>
</protein>
<proteinExistence type="evidence at protein level"/>
<name>3S11_OXYSC</name>
<sequence>MKTLLLTLVVVTIVCLDLGYTMTCYNQQSSEAKTTTTCSGGVSSCYKKTWSDGRGTIIERGCGCPSVKKGIERICCRTDKCNN</sequence>
<accession>Q45Z11</accession>
<accession>Q4VRI1</accession>
<organism>
    <name type="scientific">Oxyuranus scutellatus scutellatus</name>
    <name type="common">Australian taipan</name>
    <name type="synonym">Coastal taipan</name>
    <dbReference type="NCBI Taxonomy" id="8667"/>
    <lineage>
        <taxon>Eukaryota</taxon>
        <taxon>Metazoa</taxon>
        <taxon>Chordata</taxon>
        <taxon>Craniata</taxon>
        <taxon>Vertebrata</taxon>
        <taxon>Euteleostomi</taxon>
        <taxon>Lepidosauria</taxon>
        <taxon>Squamata</taxon>
        <taxon>Bifurcata</taxon>
        <taxon>Unidentata</taxon>
        <taxon>Episquamata</taxon>
        <taxon>Toxicofera</taxon>
        <taxon>Serpentes</taxon>
        <taxon>Colubroidea</taxon>
        <taxon>Elapidae</taxon>
        <taxon>Hydrophiinae</taxon>
        <taxon>Oxyuranus</taxon>
    </lineage>
</organism>
<feature type="signal peptide" evidence="3">
    <location>
        <begin position="1"/>
        <end position="21"/>
    </location>
</feature>
<feature type="chain" id="PRO_5000140374" description="Short neurotoxin 1" evidence="3">
    <location>
        <begin position="22"/>
        <end position="83"/>
    </location>
</feature>
<feature type="disulfide bond" evidence="1">
    <location>
        <begin position="24"/>
        <end position="45"/>
    </location>
</feature>
<feature type="disulfide bond" evidence="1">
    <location>
        <begin position="38"/>
        <end position="62"/>
    </location>
</feature>
<feature type="disulfide bond" evidence="1">
    <location>
        <begin position="64"/>
        <end position="75"/>
    </location>
</feature>
<feature type="disulfide bond" evidence="1">
    <location>
        <begin position="76"/>
        <end position="81"/>
    </location>
</feature>
<feature type="sequence conflict" description="In Ref. 2; AAY47073." evidence="4" ref="2">
    <original>I</original>
    <variation>R</variation>
    <location>
        <position position="57"/>
    </location>
</feature>
<reference key="1">
    <citation type="journal article" date="2005" name="Cell. Mol. Life Sci.">
        <title>Identification and analysis of venom gland-specific genes from the coastal taipan (Oxyuranus scutellatus) and related species.</title>
        <authorList>
            <person name="St Pierre L."/>
            <person name="Woods R."/>
            <person name="Earl S.T.H."/>
            <person name="Masci P.P."/>
            <person name="Lavin M.F."/>
        </authorList>
    </citation>
    <scope>NUCLEOTIDE SEQUENCE [LARGE SCALE MRNA]</scope>
    <source>
        <tissue>Venom gland</tissue>
    </source>
</reference>
<reference key="2">
    <citation type="submission" date="2004-07" db="EMBL/GenBank/DDBJ databases">
        <authorList>
            <person name="Welton R.E."/>
            <person name="Burnell J.N."/>
        </authorList>
    </citation>
    <scope>NUCLEOTIDE SEQUENCE [MRNA]</scope>
    <source>
        <tissue>Venom gland</tissue>
    </source>
</reference>
<reference key="3">
    <citation type="journal article" date="1996" name="Biochemistry">
        <title>Two novel alpha-neurotoxins isolated from the taipan snake, Oxyuranus scutellatus, exhibit reduced affinity for nicotinic acetylcholine receptors in brain and skeletal muscle.</title>
        <authorList>
            <person name="Zamudio F."/>
            <person name="Wolf K.M."/>
            <person name="Martin B.M."/>
            <person name="Possani L.D."/>
            <person name="Chiappinelli V.A."/>
        </authorList>
    </citation>
    <scope>PROTEIN SEQUENCE OF 22-83</scope>
    <scope>FUNCTION</scope>
    <scope>MASS SPECTROMETRY</scope>
    <scope>TOXIC DOSE</scope>
    <scope>SUBCELLULAR LOCATION</scope>
    <source>
        <tissue>Venom</tissue>
    </source>
</reference>
<reference key="4">
    <citation type="journal article" date="2007" name="Cell. Mol. Life Sci.">
        <title>Distinct activities of novel neurotoxins from Australian venomous snakes for nicotinic acetylcholine receptors.</title>
        <authorList>
            <person name="St Pierre L."/>
            <person name="Fischer H."/>
            <person name="Adams D.J."/>
            <person name="Schenning M."/>
            <person name="Lavidis N."/>
            <person name="de Jersey J."/>
            <person name="Masci P.P."/>
            <person name="Lavin M.F."/>
        </authorList>
    </citation>
    <scope>FUNCTION</scope>
</reference>
<dbReference type="EMBL" id="DQ085855">
    <property type="protein sequence ID" value="AAZ22673.1"/>
    <property type="molecule type" value="mRNA"/>
</dbReference>
<dbReference type="EMBL" id="AY691664">
    <property type="protein sequence ID" value="AAY47073.1"/>
    <property type="molecule type" value="mRNA"/>
</dbReference>
<dbReference type="SMR" id="Q45Z11"/>
<dbReference type="GO" id="GO:0005576">
    <property type="term" value="C:extracellular region"/>
    <property type="evidence" value="ECO:0007669"/>
    <property type="project" value="UniProtKB-SubCell"/>
</dbReference>
<dbReference type="GO" id="GO:0030550">
    <property type="term" value="F:acetylcholine receptor inhibitor activity"/>
    <property type="evidence" value="ECO:0007669"/>
    <property type="project" value="UniProtKB-KW"/>
</dbReference>
<dbReference type="GO" id="GO:0099106">
    <property type="term" value="F:ion channel regulator activity"/>
    <property type="evidence" value="ECO:0007669"/>
    <property type="project" value="UniProtKB-KW"/>
</dbReference>
<dbReference type="GO" id="GO:0090729">
    <property type="term" value="F:toxin activity"/>
    <property type="evidence" value="ECO:0007669"/>
    <property type="project" value="UniProtKB-KW"/>
</dbReference>
<dbReference type="CDD" id="cd00206">
    <property type="entry name" value="TFP_snake_toxin"/>
    <property type="match status" value="1"/>
</dbReference>
<dbReference type="FunFam" id="2.10.60.10:FF:000024">
    <property type="entry name" value="Cytotoxin 1"/>
    <property type="match status" value="1"/>
</dbReference>
<dbReference type="Gene3D" id="2.10.60.10">
    <property type="entry name" value="CD59"/>
    <property type="match status" value="1"/>
</dbReference>
<dbReference type="InterPro" id="IPR003571">
    <property type="entry name" value="Snake_3FTx"/>
</dbReference>
<dbReference type="InterPro" id="IPR045860">
    <property type="entry name" value="Snake_toxin-like_sf"/>
</dbReference>
<dbReference type="InterPro" id="IPR018354">
    <property type="entry name" value="Snake_toxin_con_site"/>
</dbReference>
<dbReference type="InterPro" id="IPR054131">
    <property type="entry name" value="Toxin_cobra-type"/>
</dbReference>
<dbReference type="Pfam" id="PF21947">
    <property type="entry name" value="Toxin_cobra-type"/>
    <property type="match status" value="1"/>
</dbReference>
<dbReference type="SUPFAM" id="SSF57302">
    <property type="entry name" value="Snake toxin-like"/>
    <property type="match status" value="1"/>
</dbReference>
<dbReference type="PROSITE" id="PS00272">
    <property type="entry name" value="SNAKE_TOXIN"/>
    <property type="match status" value="1"/>
</dbReference>
<keyword id="KW-0008">Acetylcholine receptor inhibiting toxin</keyword>
<keyword id="KW-0903">Direct protein sequencing</keyword>
<keyword id="KW-1015">Disulfide bond</keyword>
<keyword id="KW-0872">Ion channel impairing toxin</keyword>
<keyword id="KW-0528">Neurotoxin</keyword>
<keyword id="KW-0629">Postsynaptic neurotoxin</keyword>
<keyword id="KW-0964">Secreted</keyword>
<keyword id="KW-0732">Signal</keyword>
<keyword id="KW-0800">Toxin</keyword>